<feature type="chain" id="PRO_1000092006" description="5'-nucleotidase SurE">
    <location>
        <begin position="1"/>
        <end position="258"/>
    </location>
</feature>
<feature type="region of interest" description="Disordered" evidence="2">
    <location>
        <begin position="237"/>
        <end position="258"/>
    </location>
</feature>
<feature type="binding site" evidence="1">
    <location>
        <position position="13"/>
    </location>
    <ligand>
        <name>a divalent metal cation</name>
        <dbReference type="ChEBI" id="CHEBI:60240"/>
    </ligand>
</feature>
<feature type="binding site" evidence="1">
    <location>
        <position position="14"/>
    </location>
    <ligand>
        <name>a divalent metal cation</name>
        <dbReference type="ChEBI" id="CHEBI:60240"/>
    </ligand>
</feature>
<feature type="binding site" evidence="1">
    <location>
        <position position="44"/>
    </location>
    <ligand>
        <name>a divalent metal cation</name>
        <dbReference type="ChEBI" id="CHEBI:60240"/>
    </ligand>
</feature>
<feature type="binding site" evidence="1">
    <location>
        <position position="92"/>
    </location>
    <ligand>
        <name>a divalent metal cation</name>
        <dbReference type="ChEBI" id="CHEBI:60240"/>
    </ligand>
</feature>
<keyword id="KW-0963">Cytoplasm</keyword>
<keyword id="KW-0378">Hydrolase</keyword>
<keyword id="KW-0479">Metal-binding</keyword>
<keyword id="KW-0547">Nucleotide-binding</keyword>
<name>SURE_HALS3</name>
<reference key="1">
    <citation type="journal article" date="2008" name="Genomics">
        <title>Evolution in the laboratory: the genome of Halobacterium salinarum strain R1 compared to that of strain NRC-1.</title>
        <authorList>
            <person name="Pfeiffer F."/>
            <person name="Schuster S.C."/>
            <person name="Broicher A."/>
            <person name="Falb M."/>
            <person name="Palm P."/>
            <person name="Rodewald K."/>
            <person name="Ruepp A."/>
            <person name="Soppa J."/>
            <person name="Tittor J."/>
            <person name="Oesterhelt D."/>
        </authorList>
    </citation>
    <scope>NUCLEOTIDE SEQUENCE [LARGE SCALE GENOMIC DNA]</scope>
    <source>
        <strain>ATCC 29341 / DSM 671 / R1</strain>
    </source>
</reference>
<organism>
    <name type="scientific">Halobacterium salinarum (strain ATCC 29341 / DSM 671 / R1)</name>
    <dbReference type="NCBI Taxonomy" id="478009"/>
    <lineage>
        <taxon>Archaea</taxon>
        <taxon>Methanobacteriati</taxon>
        <taxon>Methanobacteriota</taxon>
        <taxon>Stenosarchaea group</taxon>
        <taxon>Halobacteria</taxon>
        <taxon>Halobacteriales</taxon>
        <taxon>Halobacteriaceae</taxon>
        <taxon>Halobacterium</taxon>
        <taxon>Halobacterium salinarum NRC-34001</taxon>
    </lineage>
</organism>
<evidence type="ECO:0000255" key="1">
    <source>
        <dbReference type="HAMAP-Rule" id="MF_00060"/>
    </source>
</evidence>
<evidence type="ECO:0000256" key="2">
    <source>
        <dbReference type="SAM" id="MobiDB-lite"/>
    </source>
</evidence>
<dbReference type="EC" id="3.1.3.5" evidence="1"/>
<dbReference type="EMBL" id="AM774415">
    <property type="protein sequence ID" value="CAP13883.1"/>
    <property type="molecule type" value="Genomic_DNA"/>
</dbReference>
<dbReference type="RefSeq" id="WP_010902899.1">
    <property type="nucleotide sequence ID" value="NC_010364.1"/>
</dbReference>
<dbReference type="SMR" id="B0R567"/>
<dbReference type="EnsemblBacteria" id="CAP13883">
    <property type="protein sequence ID" value="CAP13883"/>
    <property type="gene ID" value="OE_2782F"/>
</dbReference>
<dbReference type="GeneID" id="68694003"/>
<dbReference type="KEGG" id="hsl:OE_2782F"/>
<dbReference type="HOGENOM" id="CLU_045192_1_3_2"/>
<dbReference type="PhylomeDB" id="B0R567"/>
<dbReference type="Proteomes" id="UP000001321">
    <property type="component" value="Chromosome"/>
</dbReference>
<dbReference type="GO" id="GO:0005737">
    <property type="term" value="C:cytoplasm"/>
    <property type="evidence" value="ECO:0007669"/>
    <property type="project" value="UniProtKB-SubCell"/>
</dbReference>
<dbReference type="GO" id="GO:0008253">
    <property type="term" value="F:5'-nucleotidase activity"/>
    <property type="evidence" value="ECO:0007669"/>
    <property type="project" value="UniProtKB-UniRule"/>
</dbReference>
<dbReference type="GO" id="GO:0046872">
    <property type="term" value="F:metal ion binding"/>
    <property type="evidence" value="ECO:0007669"/>
    <property type="project" value="UniProtKB-UniRule"/>
</dbReference>
<dbReference type="GO" id="GO:0000166">
    <property type="term" value="F:nucleotide binding"/>
    <property type="evidence" value="ECO:0007669"/>
    <property type="project" value="UniProtKB-KW"/>
</dbReference>
<dbReference type="Gene3D" id="3.40.1210.10">
    <property type="entry name" value="Survival protein SurE-like phosphatase/nucleotidase"/>
    <property type="match status" value="1"/>
</dbReference>
<dbReference type="HAMAP" id="MF_00060">
    <property type="entry name" value="SurE"/>
    <property type="match status" value="1"/>
</dbReference>
<dbReference type="InterPro" id="IPR030048">
    <property type="entry name" value="SurE"/>
</dbReference>
<dbReference type="InterPro" id="IPR002828">
    <property type="entry name" value="SurE-like_Pase/nucleotidase"/>
</dbReference>
<dbReference type="InterPro" id="IPR036523">
    <property type="entry name" value="SurE-like_sf"/>
</dbReference>
<dbReference type="NCBIfam" id="TIGR00087">
    <property type="entry name" value="surE"/>
    <property type="match status" value="1"/>
</dbReference>
<dbReference type="PANTHER" id="PTHR30457">
    <property type="entry name" value="5'-NUCLEOTIDASE SURE"/>
    <property type="match status" value="1"/>
</dbReference>
<dbReference type="PANTHER" id="PTHR30457:SF0">
    <property type="entry name" value="PHOSPHATASE, PUTATIVE (AFU_ORTHOLOGUE AFUA_4G01070)-RELATED"/>
    <property type="match status" value="1"/>
</dbReference>
<dbReference type="Pfam" id="PF01975">
    <property type="entry name" value="SurE"/>
    <property type="match status" value="1"/>
</dbReference>
<dbReference type="SUPFAM" id="SSF64167">
    <property type="entry name" value="SurE-like"/>
    <property type="match status" value="1"/>
</dbReference>
<proteinExistence type="inferred from homology"/>
<sequence>MDADEPEILVTNDDGIDAPGIRALADGLDAVGNVTVVAPADNQSATGRAMSQEVAVHDHDLGYAVEGTPADCVVAGLEALGPYPDLVVSGVNEGGNLGMYVLGRSGTVSAAVEAAFFGVPAIAVSMYMREEQFGEPTAVADYEHAVDATTHLAHDAVTDGIFDTADYLNVNAPHPDADATGEMVVTRPSHAYDMTAAQTGDTVTLYDRLWEAMAAGDIHDPDGTDRRAVLDGHVSVSPLTAPHSTEHHDALDGIATEF</sequence>
<accession>B0R567</accession>
<protein>
    <recommendedName>
        <fullName evidence="1">5'-nucleotidase SurE</fullName>
        <ecNumber evidence="1">3.1.3.5</ecNumber>
    </recommendedName>
    <alternativeName>
        <fullName evidence="1">Nucleoside 5'-monophosphate phosphohydrolase</fullName>
    </alternativeName>
</protein>
<comment type="function">
    <text evidence="1">Nucleotidase that shows phosphatase activity on nucleoside 5'-monophosphates.</text>
</comment>
<comment type="catalytic activity">
    <reaction evidence="1">
        <text>a ribonucleoside 5'-phosphate + H2O = a ribonucleoside + phosphate</text>
        <dbReference type="Rhea" id="RHEA:12484"/>
        <dbReference type="ChEBI" id="CHEBI:15377"/>
        <dbReference type="ChEBI" id="CHEBI:18254"/>
        <dbReference type="ChEBI" id="CHEBI:43474"/>
        <dbReference type="ChEBI" id="CHEBI:58043"/>
        <dbReference type="EC" id="3.1.3.5"/>
    </reaction>
</comment>
<comment type="cofactor">
    <cofactor evidence="1">
        <name>a divalent metal cation</name>
        <dbReference type="ChEBI" id="CHEBI:60240"/>
    </cofactor>
    <text evidence="1">Binds 1 divalent metal cation per subunit.</text>
</comment>
<comment type="subcellular location">
    <subcellularLocation>
        <location evidence="1">Cytoplasm</location>
    </subcellularLocation>
</comment>
<comment type="similarity">
    <text evidence="1">Belongs to the SurE nucleotidase family.</text>
</comment>
<gene>
    <name evidence="1" type="primary">surE</name>
    <name type="ordered locus">OE_2782F</name>
</gene>